<name>MALT_CULPI</name>
<organism>
    <name type="scientific">Culex pipiens</name>
    <name type="common">House mosquito</name>
    <dbReference type="NCBI Taxonomy" id="7175"/>
    <lineage>
        <taxon>Eukaryota</taxon>
        <taxon>Metazoa</taxon>
        <taxon>Ecdysozoa</taxon>
        <taxon>Arthropoda</taxon>
        <taxon>Hexapoda</taxon>
        <taxon>Insecta</taxon>
        <taxon>Pterygota</taxon>
        <taxon>Neoptera</taxon>
        <taxon>Endopterygota</taxon>
        <taxon>Diptera</taxon>
        <taxon>Nematocera</taxon>
        <taxon>Culicoidea</taxon>
        <taxon>Culicidae</taxon>
        <taxon>Culicinae</taxon>
        <taxon>Culicini</taxon>
        <taxon>Culex</taxon>
        <taxon>Culex</taxon>
    </lineage>
</organism>
<dbReference type="EC" id="3.2.1.20" evidence="10"/>
<dbReference type="EMBL" id="AF222024">
    <property type="protein sequence ID" value="AAL05443.1"/>
    <property type="molecule type" value="mRNA"/>
</dbReference>
<dbReference type="SMR" id="Q95WY5"/>
<dbReference type="CAZy" id="GH13">
    <property type="family name" value="Glycoside Hydrolase Family 13"/>
</dbReference>
<dbReference type="GlyCosmos" id="Q95WY5">
    <property type="glycosylation" value="3 sites, No reported glycans"/>
</dbReference>
<dbReference type="GO" id="GO:0016020">
    <property type="term" value="C:membrane"/>
    <property type="evidence" value="ECO:0007669"/>
    <property type="project" value="UniProtKB-SubCell"/>
</dbReference>
<dbReference type="GO" id="GO:0004558">
    <property type="term" value="F:alpha-1,4-glucosidase activity"/>
    <property type="evidence" value="ECO:0007669"/>
    <property type="project" value="UniProtKB-EC"/>
</dbReference>
<dbReference type="GO" id="GO:0005975">
    <property type="term" value="P:carbohydrate metabolic process"/>
    <property type="evidence" value="ECO:0007669"/>
    <property type="project" value="InterPro"/>
</dbReference>
<dbReference type="CDD" id="cd11328">
    <property type="entry name" value="AmyAc_maltase"/>
    <property type="match status" value="1"/>
</dbReference>
<dbReference type="FunFam" id="3.90.400.10:FF:000001">
    <property type="entry name" value="Maltase A3, isoform A"/>
    <property type="match status" value="1"/>
</dbReference>
<dbReference type="Gene3D" id="3.20.20.80">
    <property type="entry name" value="Glycosidases"/>
    <property type="match status" value="2"/>
</dbReference>
<dbReference type="Gene3D" id="2.60.40.1180">
    <property type="entry name" value="Golgi alpha-mannosidase II"/>
    <property type="match status" value="1"/>
</dbReference>
<dbReference type="Gene3D" id="3.90.400.10">
    <property type="entry name" value="Oligo-1,6-glucosidase, Domain 2"/>
    <property type="match status" value="1"/>
</dbReference>
<dbReference type="InterPro" id="IPR006047">
    <property type="entry name" value="Glyco_hydro_13_cat_dom"/>
</dbReference>
<dbReference type="InterPro" id="IPR013780">
    <property type="entry name" value="Glyco_hydro_b"/>
</dbReference>
<dbReference type="InterPro" id="IPR017853">
    <property type="entry name" value="Glycoside_hydrolase_SF"/>
</dbReference>
<dbReference type="InterPro" id="IPR045857">
    <property type="entry name" value="O16G_dom_2"/>
</dbReference>
<dbReference type="PANTHER" id="PTHR10357">
    <property type="entry name" value="ALPHA-AMYLASE FAMILY MEMBER"/>
    <property type="match status" value="1"/>
</dbReference>
<dbReference type="PANTHER" id="PTHR10357:SF179">
    <property type="entry name" value="NEUTRAL AND BASIC AMINO ACID TRANSPORT PROTEIN RBAT"/>
    <property type="match status" value="1"/>
</dbReference>
<dbReference type="Pfam" id="PF00128">
    <property type="entry name" value="Alpha-amylase"/>
    <property type="match status" value="1"/>
</dbReference>
<dbReference type="SMART" id="SM00642">
    <property type="entry name" value="Aamy"/>
    <property type="match status" value="1"/>
</dbReference>
<dbReference type="SUPFAM" id="SSF51445">
    <property type="entry name" value="(Trans)glycosidases"/>
    <property type="match status" value="1"/>
</dbReference>
<accession>Q95WY5</accession>
<keyword id="KW-0903">Direct protein sequencing</keyword>
<keyword id="KW-0325">Glycoprotein</keyword>
<keyword id="KW-0326">Glycosidase</keyword>
<keyword id="KW-0378">Hydrolase</keyword>
<keyword id="KW-0472">Membrane</keyword>
<keyword id="KW-0732">Signal</keyword>
<keyword id="KW-0812">Transmembrane</keyword>
<keyword id="KW-1133">Transmembrane helix</keyword>
<gene>
    <name evidence="8" type="primary">CPM1</name>
</gene>
<sequence>MRPLGALSLFALLATTVSGLAIREPDAKDWYQHATFYQIYPRSFLDSNGDGIGDLAGITSKMKYLADIGIDATWLSPPFKSPLKDFGYDVSDFYAIQPEYGNLTDFDKLVEEAHKNGIKLMLDFIPNHSSDQHEWFVKSVARDPEYSEFYVWKPPATGGGPPNNWISVFGGPAWTYNAARGEYYLHQFTPQQPDLNYRNPKLLAEMTKMLFFWLDRGVDGFRLDAINHMFEDEQFRDEPVSGWGQPGEYDSLDHIYTKDIPDVYNVVYNWRDQMDKYSAEKGRTIILMTEAYSSIEGTMLYYESADRKRQGAHMPFNFQLIYDFKKEQNAVGLKSSIDWWMNNMPARHTPSWVAGSHDHSRVASRVGLDRVDQVMTLMHTLPGTSITYYGEEVAMQDFKEAQQFDNRDPNRTPMQWDSSTSAGFSTNTNTWLRVHPDYARYNVDVMQKNPQSTFHHFQHLTKLRGHRTMQSGEYVHKTVGTKVYALLRELRGEDSFLTVLNMAGAEDTVDLGDFVNLPQKMRVEVAQPNSKSKAGNEVDISKLTLGPYDSVVLRATVSSAAAINLSIGLLLAIMARYIFV</sequence>
<reference key="1">
    <citation type="journal article" date="2001" name="Insect Biochem. Mol. Biol.">
        <title>The receptor of Bacillus sphaericus binary toxin in Culex pipiens (Diptera: Culicidae) midgut: molecular cloning and expression.</title>
        <authorList>
            <person name="Darboux I."/>
            <person name="Nielsen-LeRoux C."/>
            <person name="Charles J.F."/>
            <person name="Pauron D."/>
        </authorList>
    </citation>
    <scope>NUCLEOTIDE SEQUENCE [MRNA]</scope>
    <scope>FUNCTION AS AN ALPHA-GLUCOSIDASE</scope>
    <scope>FUNCTION AS BINB TOXIN RECEPTOR (MICROBIAL INFECTION)</scope>
    <scope>INTERACTION WITH LYSINIBACILLUS SPHAERICUS BINB (MICROBIAL INFECTION)</scope>
    <source>
        <strain>IP</strain>
    </source>
</reference>
<reference key="2">
    <citation type="journal article" date="1999" name="Insect Biochem. Mol. Biol.">
        <title>Identification of the receptor for Bacillus sphaericus crystal toxin in the brush border membrane of the mosquito Culex pipiens (Diptera: Culicidae).</title>
        <authorList>
            <person name="Silva-Filha M.H."/>
            <person name="Nielsen-LeRoux C."/>
            <person name="Charles J.F."/>
        </authorList>
    </citation>
    <scope>PROTEIN SEQUENCE OF 30-44; 64-80 AND 85-99</scope>
    <scope>FUNCTION AS BINB TOXIN RECEPTOR (MICROBIAL INFECTION)</scope>
    <scope>INTERACTION WITH LYSINIBACILLUS SPHAERICUS BINB (MICROBIAL INFECTION)</scope>
    <scope>DEVELOPMENTAL STAGE</scope>
    <source>
        <strain>IP</strain>
    </source>
</reference>
<reference key="3">
    <citation type="journal article" date="2002" name="Proc. Natl. Acad. Sci. U.S.A.">
        <title>Loss of the membrane anchor of the target receptor is a mechanism of bioinsecticide resistance.</title>
        <authorList>
            <person name="Darboux I."/>
            <person name="Pauchet Y."/>
            <person name="Castella C."/>
            <person name="Silva-Filha M.H."/>
            <person name="Nielsen-LeRoux C."/>
            <person name="Charles J.F."/>
            <person name="Pauron D."/>
        </authorList>
    </citation>
    <scope>NUCLEOTIDE SEQUENCE [MRNA] OF GEO MUTANT</scope>
    <scope>MECHANISM OF RESISTANCE TO L.SPHAERICUS (MICROBIAL INFECTION)</scope>
    <scope>DEVELOPMENTAL STAGE</scope>
    <source>
        <strain>GEO</strain>
        <strain>IP</strain>
    </source>
</reference>
<protein>
    <recommendedName>
        <fullName evidence="7">Alpha-glucosidase</fullName>
        <ecNumber evidence="10">3.2.1.20</ecNumber>
    </recommendedName>
    <alternativeName>
        <fullName evidence="7">Binary toxin-binding alpha-glucosidase</fullName>
    </alternativeName>
    <alternativeName>
        <fullName evidence="8">Culex pipiens maltase 1</fullName>
        <shortName evidence="8">Cpm1</shortName>
    </alternativeName>
</protein>
<evidence type="ECO:0000250" key="1">
    <source>
        <dbReference type="UniProtKB" id="A0R6E0"/>
    </source>
</evidence>
<evidence type="ECO:0000250" key="2">
    <source>
        <dbReference type="UniProtKB" id="Q55088"/>
    </source>
</evidence>
<evidence type="ECO:0000255" key="3"/>
<evidence type="ECO:0000269" key="4">
    <source>
    </source>
</evidence>
<evidence type="ECO:0000269" key="5">
    <source>
    </source>
</evidence>
<evidence type="ECO:0000269" key="6">
    <source ref="2"/>
</evidence>
<evidence type="ECO:0000303" key="7">
    <source>
    </source>
</evidence>
<evidence type="ECO:0000303" key="8">
    <source ref="2"/>
</evidence>
<evidence type="ECO:0000305" key="9"/>
<evidence type="ECO:0000305" key="10">
    <source>
    </source>
</evidence>
<evidence type="ECO:0000305" key="11">
    <source ref="2"/>
</evidence>
<feature type="signal peptide" evidence="3">
    <location>
        <begin position="1"/>
        <end position="19"/>
    </location>
</feature>
<feature type="chain" id="PRO_5004321121" description="Alpha-glucosidase" evidence="3">
    <location>
        <begin position="20"/>
        <end position="580"/>
    </location>
</feature>
<feature type="transmembrane region" description="Helical" evidence="3">
    <location>
        <begin position="560"/>
        <end position="580"/>
    </location>
</feature>
<feature type="active site" description="Nucleophile" evidence="1">
    <location>
        <position position="224"/>
    </location>
</feature>
<feature type="active site" description="Proton donor" evidence="1">
    <location>
        <position position="290"/>
    </location>
</feature>
<feature type="site" description="Transition state stabilizer" evidence="2">
    <location>
        <position position="358"/>
    </location>
</feature>
<feature type="glycosylation site" description="N-linked (GlcNAc...) asparagine" evidence="3">
    <location>
        <position position="102"/>
    </location>
</feature>
<feature type="glycosylation site" description="N-linked (GlcNAc...) asparagine" evidence="3">
    <location>
        <position position="127"/>
    </location>
</feature>
<feature type="glycosylation site" description="N-linked (GlcNAc...) asparagine" evidence="3">
    <location>
        <position position="501"/>
    </location>
</feature>
<feature type="sequence variant" description="In strain: GEO." evidence="5">
    <original>A</original>
    <variation>D</variation>
    <location>
        <position position="95"/>
    </location>
</feature>
<feature type="sequence variant" description="In strain: GEO." evidence="5">
    <original>K</original>
    <variation>M</variation>
    <location>
        <position position="115"/>
    </location>
</feature>
<feature type="sequence variant" description="In strain: GEO." evidence="5">
    <original>A</original>
    <variation>T</variation>
    <location>
        <position position="178"/>
    </location>
</feature>
<feature type="sequence variant" description="In strain: GEO." evidence="5">
    <original>F</original>
    <variation>H</variation>
    <location>
        <position position="230"/>
    </location>
</feature>
<feature type="sequence variant" description="In strain: GEO." evidence="5">
    <original>N</original>
    <variation>D</variation>
    <location>
        <position position="265"/>
    </location>
</feature>
<feature type="sequence variant" description="In strain: GEO." evidence="5">
    <original>L</original>
    <variation>M</variation>
    <location>
        <position position="486"/>
    </location>
</feature>
<feature type="sequence variant" description="In strain: GEO." evidence="5">
    <location>
        <begin position="569"/>
        <end position="580"/>
    </location>
</feature>
<comment type="function">
    <text evidence="11">Probably an alpha-glucosidase, it has no alpha-amylase function.</text>
</comment>
<comment type="function">
    <text evidence="6">(Microbial infection) Serves as the larval receptor for Lysinibacillus sphaericus BinB toxin (Ref.2).</text>
</comment>
<comment type="catalytic activity">
    <reaction evidence="10">
        <text>Hydrolysis of terminal, non-reducing (1-&gt;4)-linked alpha-D-glucose residues with release of alpha-D-glucose.</text>
        <dbReference type="EC" id="3.2.1.20"/>
    </reaction>
</comment>
<comment type="subunit">
    <text evidence="4 6">(Microbial infection) Binds to L.sphaericus BinB subunit of the binary toxin BinAB.</text>
</comment>
<comment type="subcellular location">
    <subcellularLocation>
        <location evidence="3">Membrane</location>
        <topology evidence="3">Single-pass type I membrane protein</topology>
    </subcellularLocation>
</comment>
<comment type="tissue specificity">
    <text evidence="5">In 4th-instar larvae produced in the brush border membranes of the gastric caeca and the posterior stomach cells (at protein level).</text>
</comment>
<comment type="developmental stage">
    <text evidence="4 5 6">Expressed in 4th-instar larval midgut, in the brush border membranes of the gastric cesum and the posterior stomach cells (at protein level).</text>
</comment>
<comment type="polymorphism">
    <text evidence="5">In mosquito strain GEO, which is 10(5)-fold more resistant to L.sphaericus than wild-type, a premature stop codon at Leu-569 leads to loss of the probable GPI anchor and disrupts the correct subcellular location. Restoration of Leu-269 rescues the subcellular location and binary Bin toxin binding to transfected Sf9 cells in culture (PubMed:11983886).</text>
</comment>
<comment type="similarity">
    <text evidence="9">Belongs to the glycosyl hydrolase 13 family.</text>
</comment>
<proteinExistence type="evidence at protein level"/>